<accession>O59704</accession>
<feature type="chain" id="PRO_0000339337" description="Elongator complex protein 1">
    <location>
        <begin position="1"/>
        <end position="1253"/>
    </location>
</feature>
<feature type="region of interest" description="Mediates dimerization" evidence="1">
    <location>
        <begin position="830"/>
        <end position="1253"/>
    </location>
</feature>
<feature type="region of interest" description="Disordered" evidence="3">
    <location>
        <begin position="1126"/>
        <end position="1153"/>
    </location>
</feature>
<feature type="region of interest" description="Required for binding to tRNA" evidence="2">
    <location>
        <begin position="1137"/>
        <end position="1155"/>
    </location>
</feature>
<feature type="compositionally biased region" description="Polar residues" evidence="3">
    <location>
        <begin position="1126"/>
        <end position="1141"/>
    </location>
</feature>
<feature type="compositionally biased region" description="Basic residues" evidence="3">
    <location>
        <begin position="1142"/>
        <end position="1153"/>
    </location>
</feature>
<proteinExistence type="inferred from homology"/>
<keyword id="KW-0963">Cytoplasm</keyword>
<keyword id="KW-1185">Reference proteome</keyword>
<keyword id="KW-0819">tRNA processing</keyword>
<sequence length="1253" mass="141607">MKNLVTHLHHVFPNVNGSIKALAFNSISDKIYVVCGLDNENPGIEIYEISENDDVSKLVEFDSPSFVSDNGDIDEIQSMQFLGEPMAICLSLKGGDIVMVKVDPSPEEAPWEIIGNVENGIVASCWSTDEQVFCIITGGDTILFMTKNFDIISETSLSDADLNEFNKHISVGWGRSETQFRGKRVRAKLRDPTLPEKIDEGKLSDVDDGKTYICWRGDSQYVSINRLEKGPRRAIRVYSREGLLDSISEPQDGQQSLLSWKPSGSVLATIKSDSSDNSSKVIFFERNGLRHGEFSLRRREDEKYTGLAWNVSSSILAVSTENSVMLWTTGNYHWYLKKEINIPQNALISWHPEHANTLYITGKNHIEKVVFDLKYVTEFSTSPNDFGLIPVIDGSSLLVTPLSLCNIPPPMCRYKLSLDYNVQMTSINATSDMLFAADDRRLTAFTFNSQEDIAKFGEFDISTYAEGLNFKSLLGLSGNQVLLLADGTNNCSKFFVFQCDEDNESLKLLASESFESCILNASYCSEMLFFQTSSGKLISYNLNVKSIESISLSFPKPCSDFVVVPVHETFVPIGLTSYGRLYAEQRLLSTGVLSFFCTERFVLFTTTKNLLKFVHLVSTVDDLQVVEDDAVDRHDERCRVVERGSKIVASMPSKMAVVLQMPRGNLETIYPRIMVLDGVRTYIKALKYGDAFKVCRTHRLDLNILFDYDPDLFLKNIPVFVDGLYRVDYLDLFLTSLKPENVTTGMYSDTSKSQSQQSVTTIDNKVNLLCKIIREHLTSKYGDTHFQAIITSYLCESPPKIEAALGMISGLIKAQSETVDLAIEHMCFLVDVNMLFDHALGLYDLKLALLIAQQSQKDPREYVPFLHEFQKQESLRRKFNIDCYLKRYERALGHLKEMENAFDEFKNFTIQHKLYPRALELYKYDKEAQKEVLIIFAQYLRENGKSNEAAIAYESVGKISEAIEAYKSAGMWRECLSILQQTTNSEDLIRETAEDLASLCIEKREHCDAGSINLLYLSNPREAVIQMCKGSQYSEAIRIARATGDSSIYKDLLISVLGESFGEASELVADFRNQIKSQTERILVLREKKKEDPISWMEGTMEDQTPDDISLASTSLSTNRSLYTQYTKSSNSSKMTRNTSKNNRRLERKRARGKKGTVFEEEYLVNSLRRLIARVEEIRPEVHRLLEALVRCNMTTQASELQRNFANVIGTIGEKVIPILSVPVSTFETALGEQPQAPVVPNVKPFEKLSILI</sequence>
<protein>
    <recommendedName>
        <fullName>Elongator complex protein 1</fullName>
    </recommendedName>
</protein>
<organism>
    <name type="scientific">Schizosaccharomyces pombe (strain 972 / ATCC 24843)</name>
    <name type="common">Fission yeast</name>
    <dbReference type="NCBI Taxonomy" id="284812"/>
    <lineage>
        <taxon>Eukaryota</taxon>
        <taxon>Fungi</taxon>
        <taxon>Dikarya</taxon>
        <taxon>Ascomycota</taxon>
        <taxon>Taphrinomycotina</taxon>
        <taxon>Schizosaccharomycetes</taxon>
        <taxon>Schizosaccharomycetales</taxon>
        <taxon>Schizosaccharomycetaceae</taxon>
        <taxon>Schizosaccharomyces</taxon>
    </lineage>
</organism>
<name>ELP1_SCHPO</name>
<dbReference type="EMBL" id="CU329671">
    <property type="protein sequence ID" value="CAA19055.1"/>
    <property type="molecule type" value="Genomic_DNA"/>
</dbReference>
<dbReference type="PIR" id="T40302">
    <property type="entry name" value="T40302"/>
</dbReference>
<dbReference type="RefSeq" id="NP_595335.1">
    <property type="nucleotide sequence ID" value="NM_001021243.2"/>
</dbReference>
<dbReference type="SMR" id="O59704"/>
<dbReference type="BioGRID" id="277532">
    <property type="interactions" value="90"/>
</dbReference>
<dbReference type="ComplexPortal" id="CPX-25728">
    <property type="entry name" value="Elongator holoenzyme complex"/>
</dbReference>
<dbReference type="FunCoup" id="O59704">
    <property type="interactions" value="528"/>
</dbReference>
<dbReference type="IntAct" id="O59704">
    <property type="interactions" value="1"/>
</dbReference>
<dbReference type="STRING" id="284812.O59704"/>
<dbReference type="iPTMnet" id="O59704"/>
<dbReference type="PaxDb" id="4896-SPBC36.07.1"/>
<dbReference type="EnsemblFungi" id="SPBC36.07.1">
    <property type="protein sequence ID" value="SPBC36.07.1:pep"/>
    <property type="gene ID" value="SPBC36.07"/>
</dbReference>
<dbReference type="GeneID" id="2541017"/>
<dbReference type="KEGG" id="spo:2541017"/>
<dbReference type="PomBase" id="SPBC36.07">
    <property type="gene designation" value="elp1"/>
</dbReference>
<dbReference type="VEuPathDB" id="FungiDB:SPBC36.07"/>
<dbReference type="eggNOG" id="KOG1920">
    <property type="taxonomic scope" value="Eukaryota"/>
</dbReference>
<dbReference type="HOGENOM" id="CLU_001477_0_0_1"/>
<dbReference type="InParanoid" id="O59704"/>
<dbReference type="OMA" id="WRESLYC"/>
<dbReference type="PhylomeDB" id="O59704"/>
<dbReference type="UniPathway" id="UPA00988"/>
<dbReference type="PRO" id="PR:O59704"/>
<dbReference type="Proteomes" id="UP000002485">
    <property type="component" value="Chromosome II"/>
</dbReference>
<dbReference type="GO" id="GO:0000785">
    <property type="term" value="C:chromatin"/>
    <property type="evidence" value="ECO:0000305"/>
    <property type="project" value="PomBase"/>
</dbReference>
<dbReference type="GO" id="GO:0005829">
    <property type="term" value="C:cytosol"/>
    <property type="evidence" value="ECO:0007005"/>
    <property type="project" value="PomBase"/>
</dbReference>
<dbReference type="GO" id="GO:0033588">
    <property type="term" value="C:elongator holoenzyme complex"/>
    <property type="evidence" value="ECO:0000318"/>
    <property type="project" value="GO_Central"/>
</dbReference>
<dbReference type="GO" id="GO:0000049">
    <property type="term" value="F:tRNA binding"/>
    <property type="evidence" value="ECO:0000318"/>
    <property type="project" value="GO_Central"/>
</dbReference>
<dbReference type="GO" id="GO:0140018">
    <property type="term" value="P:regulation of cytoplasmic translational fidelity"/>
    <property type="evidence" value="ECO:0000315"/>
    <property type="project" value="PomBase"/>
</dbReference>
<dbReference type="GO" id="GO:0002926">
    <property type="term" value="P:tRNA wobble base 5-methoxycarbonylmethyl-2-thiouridinylation"/>
    <property type="evidence" value="ECO:0000316"/>
    <property type="project" value="PomBase"/>
</dbReference>
<dbReference type="Gene3D" id="1.25.40.470">
    <property type="match status" value="1"/>
</dbReference>
<dbReference type="InterPro" id="IPR056167">
    <property type="entry name" value="A-sol_ELP1"/>
</dbReference>
<dbReference type="InterPro" id="IPR006849">
    <property type="entry name" value="Elp1"/>
</dbReference>
<dbReference type="InterPro" id="IPR056165">
    <property type="entry name" value="ELP1_b-prop_2"/>
</dbReference>
<dbReference type="InterPro" id="IPR056164">
    <property type="entry name" value="ELP1_N_b-prop_1"/>
</dbReference>
<dbReference type="InterPro" id="IPR056169">
    <property type="entry name" value="HB_ELP1"/>
</dbReference>
<dbReference type="InterPro" id="IPR056166">
    <property type="entry name" value="TPR_ELP1"/>
</dbReference>
<dbReference type="InterPro" id="IPR036322">
    <property type="entry name" value="WD40_repeat_dom_sf"/>
</dbReference>
<dbReference type="PANTHER" id="PTHR12747">
    <property type="entry name" value="ELONGATOR COMPLEX PROTEIN 1"/>
    <property type="match status" value="1"/>
</dbReference>
<dbReference type="PANTHER" id="PTHR12747:SF0">
    <property type="entry name" value="ELONGATOR COMPLEX PROTEIN 1"/>
    <property type="match status" value="1"/>
</dbReference>
<dbReference type="Pfam" id="PF23925">
    <property type="entry name" value="A-sol_ELP1"/>
    <property type="match status" value="1"/>
</dbReference>
<dbReference type="Pfam" id="PF04762">
    <property type="entry name" value="Beta-prop_ELP1_1st"/>
    <property type="match status" value="1"/>
</dbReference>
<dbReference type="Pfam" id="PF23797">
    <property type="entry name" value="Beta-prop_ELP1_2nd"/>
    <property type="match status" value="1"/>
</dbReference>
<dbReference type="Pfam" id="PF23936">
    <property type="entry name" value="HB_ELP1"/>
    <property type="match status" value="1"/>
</dbReference>
<dbReference type="Pfam" id="PF23878">
    <property type="entry name" value="TPR_ELP1"/>
    <property type="match status" value="1"/>
</dbReference>
<dbReference type="PIRSF" id="PIRSF017233">
    <property type="entry name" value="IKAP"/>
    <property type="match status" value="1"/>
</dbReference>
<dbReference type="SUPFAM" id="SSF50978">
    <property type="entry name" value="WD40 repeat-like"/>
    <property type="match status" value="1"/>
</dbReference>
<evidence type="ECO:0000250" key="1">
    <source>
        <dbReference type="UniProtKB" id="O95163"/>
    </source>
</evidence>
<evidence type="ECO:0000250" key="2">
    <source>
        <dbReference type="UniProtKB" id="Q06706"/>
    </source>
</evidence>
<evidence type="ECO:0000256" key="3">
    <source>
        <dbReference type="SAM" id="MobiDB-lite"/>
    </source>
</evidence>
<evidence type="ECO:0000269" key="4">
    <source>
    </source>
</evidence>
<evidence type="ECO:0000269" key="5">
    <source>
    </source>
</evidence>
<evidence type="ECO:0000303" key="6">
    <source>
    </source>
</evidence>
<evidence type="ECO:0000303" key="7">
    <source>
    </source>
</evidence>
<evidence type="ECO:0000305" key="8"/>
<evidence type="ECO:0000312" key="9">
    <source>
        <dbReference type="PomBase" id="SPBC36.07"/>
    </source>
</evidence>
<comment type="function">
    <text evidence="2 5 7">Component of the elongator complex, a multiprotein complex which is required for multiple tRNA modifications, including mcm5U (5-methoxycarbonylmethyl uridine), mcm5s2U (5-methoxycarbonylmethyl-2-thiouridine), and ncm5U (5-carbamoylmethyl uridine) (PubMed:22768388). The elongator complex catalyzes formation of carboxymethyluridine in the wobble base at position 34 in tRNAs (PubMed:29332244). ELP1 binds to tRNA, mediating interaction of the elongator complex with tRNA (By similarity).</text>
</comment>
<comment type="pathway">
    <text evidence="5">tRNA modification; 5-methoxycarbonylmethyl-2-thiouridine-tRNA biosynthesis.</text>
</comment>
<comment type="subunit">
    <text evidence="2">Homodimer. Component of the elongator complex.</text>
</comment>
<comment type="subcellular location">
    <subcellularLocation>
        <location evidence="4">Cytoplasm</location>
    </subcellularLocation>
</comment>
<comment type="similarity">
    <text evidence="8">Belongs to the ELP1/IKA1 family.</text>
</comment>
<comment type="caution">
    <text evidence="1">The elongator complex was originally thought to play a role in transcription elongation. However, it is no longer thought to play a direct role in this process and its primary function is thought to be in tRNA modification.</text>
</comment>
<reference key="1">
    <citation type="journal article" date="2002" name="Nature">
        <title>The genome sequence of Schizosaccharomyces pombe.</title>
        <authorList>
            <person name="Wood V."/>
            <person name="Gwilliam R."/>
            <person name="Rajandream M.A."/>
            <person name="Lyne M.H."/>
            <person name="Lyne R."/>
            <person name="Stewart A."/>
            <person name="Sgouros J.G."/>
            <person name="Peat N."/>
            <person name="Hayles J."/>
            <person name="Baker S.G."/>
            <person name="Basham D."/>
            <person name="Bowman S."/>
            <person name="Brooks K."/>
            <person name="Brown D."/>
            <person name="Brown S."/>
            <person name="Chillingworth T."/>
            <person name="Churcher C.M."/>
            <person name="Collins M."/>
            <person name="Connor R."/>
            <person name="Cronin A."/>
            <person name="Davis P."/>
            <person name="Feltwell T."/>
            <person name="Fraser A."/>
            <person name="Gentles S."/>
            <person name="Goble A."/>
            <person name="Hamlin N."/>
            <person name="Harris D.E."/>
            <person name="Hidalgo J."/>
            <person name="Hodgson G."/>
            <person name="Holroyd S."/>
            <person name="Hornsby T."/>
            <person name="Howarth S."/>
            <person name="Huckle E.J."/>
            <person name="Hunt S."/>
            <person name="Jagels K."/>
            <person name="James K.D."/>
            <person name="Jones L."/>
            <person name="Jones M."/>
            <person name="Leather S."/>
            <person name="McDonald S."/>
            <person name="McLean J."/>
            <person name="Mooney P."/>
            <person name="Moule S."/>
            <person name="Mungall K.L."/>
            <person name="Murphy L.D."/>
            <person name="Niblett D."/>
            <person name="Odell C."/>
            <person name="Oliver K."/>
            <person name="O'Neil S."/>
            <person name="Pearson D."/>
            <person name="Quail M.A."/>
            <person name="Rabbinowitsch E."/>
            <person name="Rutherford K.M."/>
            <person name="Rutter S."/>
            <person name="Saunders D."/>
            <person name="Seeger K."/>
            <person name="Sharp S."/>
            <person name="Skelton J."/>
            <person name="Simmonds M.N."/>
            <person name="Squares R."/>
            <person name="Squares S."/>
            <person name="Stevens K."/>
            <person name="Taylor K."/>
            <person name="Taylor R.G."/>
            <person name="Tivey A."/>
            <person name="Walsh S.V."/>
            <person name="Warren T."/>
            <person name="Whitehead S."/>
            <person name="Woodward J.R."/>
            <person name="Volckaert G."/>
            <person name="Aert R."/>
            <person name="Robben J."/>
            <person name="Grymonprez B."/>
            <person name="Weltjens I."/>
            <person name="Vanstreels E."/>
            <person name="Rieger M."/>
            <person name="Schaefer M."/>
            <person name="Mueller-Auer S."/>
            <person name="Gabel C."/>
            <person name="Fuchs M."/>
            <person name="Duesterhoeft A."/>
            <person name="Fritzc C."/>
            <person name="Holzer E."/>
            <person name="Moestl D."/>
            <person name="Hilbert H."/>
            <person name="Borzym K."/>
            <person name="Langer I."/>
            <person name="Beck A."/>
            <person name="Lehrach H."/>
            <person name="Reinhardt R."/>
            <person name="Pohl T.M."/>
            <person name="Eger P."/>
            <person name="Zimmermann W."/>
            <person name="Wedler H."/>
            <person name="Wambutt R."/>
            <person name="Purnelle B."/>
            <person name="Goffeau A."/>
            <person name="Cadieu E."/>
            <person name="Dreano S."/>
            <person name="Gloux S."/>
            <person name="Lelaure V."/>
            <person name="Mottier S."/>
            <person name="Galibert F."/>
            <person name="Aves S.J."/>
            <person name="Xiang Z."/>
            <person name="Hunt C."/>
            <person name="Moore K."/>
            <person name="Hurst S.M."/>
            <person name="Lucas M."/>
            <person name="Rochet M."/>
            <person name="Gaillardin C."/>
            <person name="Tallada V.A."/>
            <person name="Garzon A."/>
            <person name="Thode G."/>
            <person name="Daga R.R."/>
            <person name="Cruzado L."/>
            <person name="Jimenez J."/>
            <person name="Sanchez M."/>
            <person name="del Rey F."/>
            <person name="Benito J."/>
            <person name="Dominguez A."/>
            <person name="Revuelta J.L."/>
            <person name="Moreno S."/>
            <person name="Armstrong J."/>
            <person name="Forsburg S.L."/>
            <person name="Cerutti L."/>
            <person name="Lowe T."/>
            <person name="McCombie W.R."/>
            <person name="Paulsen I."/>
            <person name="Potashkin J."/>
            <person name="Shpakovski G.V."/>
            <person name="Ussery D."/>
            <person name="Barrell B.G."/>
            <person name="Nurse P."/>
        </authorList>
    </citation>
    <scope>NUCLEOTIDE SEQUENCE [LARGE SCALE GENOMIC DNA]</scope>
    <source>
        <strain>972 / ATCC 24843</strain>
    </source>
</reference>
<reference key="2">
    <citation type="journal article" date="2006" name="Nat. Biotechnol.">
        <title>ORFeome cloning and global analysis of protein localization in the fission yeast Schizosaccharomyces pombe.</title>
        <authorList>
            <person name="Matsuyama A."/>
            <person name="Arai R."/>
            <person name="Yashiroda Y."/>
            <person name="Shirai A."/>
            <person name="Kamata A."/>
            <person name="Sekido S."/>
            <person name="Kobayashi Y."/>
            <person name="Hashimoto A."/>
            <person name="Hamamoto M."/>
            <person name="Hiraoka Y."/>
            <person name="Horinouchi S."/>
            <person name="Yoshida M."/>
        </authorList>
    </citation>
    <scope>SUBCELLULAR LOCATION [LARGE SCALE ANALYSIS]</scope>
</reference>
<reference key="3">
    <citation type="journal article" date="2012" name="Cell Rep.">
        <title>Translational control of cell division by Elongator.</title>
        <authorList>
            <person name="Bauer F."/>
            <person name="Matsuyama A."/>
            <person name="Candiracci J."/>
            <person name="Dieu M."/>
            <person name="Scheliga J."/>
            <person name="Wolf D.A."/>
            <person name="Yoshida M."/>
            <person name="Hermand D."/>
        </authorList>
    </citation>
    <scope>FUNCTION</scope>
    <scope>PATHWAY</scope>
</reference>
<reference key="4">
    <citation type="journal article" date="2018" name="Cell. Mol. Life Sci.">
        <title>Structural insights into the function of Elongator.</title>
        <authorList>
            <person name="Dalwadi U."/>
            <person name="Yip C.K."/>
        </authorList>
    </citation>
    <scope>REVIEW</scope>
</reference>
<gene>
    <name evidence="9" type="primary">elp1</name>
    <name evidence="6 9" type="synonym">iki3</name>
    <name type="ORF">SPBC36.07</name>
</gene>